<protein>
    <recommendedName>
        <fullName evidence="1">Small ribosomal subunit protein uS13</fullName>
    </recommendedName>
    <alternativeName>
        <fullName evidence="3">30S ribosomal protein S13</fullName>
    </alternativeName>
</protein>
<keyword id="KW-1185">Reference proteome</keyword>
<keyword id="KW-0687">Ribonucleoprotein</keyword>
<keyword id="KW-0689">Ribosomal protein</keyword>
<keyword id="KW-0694">RNA-binding</keyword>
<keyword id="KW-0699">rRNA-binding</keyword>
<keyword id="KW-0820">tRNA-binding</keyword>
<proteinExistence type="inferred from homology"/>
<organism>
    <name type="scientific">Polynucleobacter asymbioticus (strain DSM 18221 / CIP 109841 / QLW-P1DMWA-1)</name>
    <name type="common">Polynucleobacter necessarius subsp. asymbioticus</name>
    <dbReference type="NCBI Taxonomy" id="312153"/>
    <lineage>
        <taxon>Bacteria</taxon>
        <taxon>Pseudomonadati</taxon>
        <taxon>Pseudomonadota</taxon>
        <taxon>Betaproteobacteria</taxon>
        <taxon>Burkholderiales</taxon>
        <taxon>Burkholderiaceae</taxon>
        <taxon>Polynucleobacter</taxon>
    </lineage>
</organism>
<sequence length="121" mass="13478">MARIAGVNIPNHQHTVIGLTAIFGIGTTRANKICQTTGVAIDKKVKDLTDADLEKLRDEVGKFITEGDLRREVTMSIKRLMDLGCYRGVRHRKGLPVRGQRTKTNARTRKGPRKSGVQLKK</sequence>
<evidence type="ECO:0000255" key="1">
    <source>
        <dbReference type="HAMAP-Rule" id="MF_01315"/>
    </source>
</evidence>
<evidence type="ECO:0000256" key="2">
    <source>
        <dbReference type="SAM" id="MobiDB-lite"/>
    </source>
</evidence>
<evidence type="ECO:0000305" key="3"/>
<name>RS13_POLAQ</name>
<reference key="1">
    <citation type="journal article" date="2012" name="Stand. Genomic Sci.">
        <title>Complete genome sequence of Polynucleobacter necessarius subsp. asymbioticus type strain (QLW-P1DMWA-1(T)).</title>
        <authorList>
            <person name="Meincke L."/>
            <person name="Copeland A."/>
            <person name="Lapidus A."/>
            <person name="Lucas S."/>
            <person name="Berry K.W."/>
            <person name="Del Rio T.G."/>
            <person name="Hammon N."/>
            <person name="Dalin E."/>
            <person name="Tice H."/>
            <person name="Pitluck S."/>
            <person name="Richardson P."/>
            <person name="Bruce D."/>
            <person name="Goodwin L."/>
            <person name="Han C."/>
            <person name="Tapia R."/>
            <person name="Detter J.C."/>
            <person name="Schmutz J."/>
            <person name="Brettin T."/>
            <person name="Larimer F."/>
            <person name="Land M."/>
            <person name="Hauser L."/>
            <person name="Kyrpides N.C."/>
            <person name="Ivanova N."/>
            <person name="Goker M."/>
            <person name="Woyke T."/>
            <person name="Wu Q.L."/>
            <person name="Pockl M."/>
            <person name="Hahn M.W."/>
            <person name="Klenk H.P."/>
        </authorList>
    </citation>
    <scope>NUCLEOTIDE SEQUENCE [LARGE SCALE GENOMIC DNA]</scope>
    <source>
        <strain>DSM 18221 / CIP 109841 / QLW-P1DMWA-1</strain>
    </source>
</reference>
<gene>
    <name evidence="1" type="primary">rpsM</name>
    <name type="ordered locus">Pnuc_0075</name>
</gene>
<dbReference type="EMBL" id="CP000655">
    <property type="protein sequence ID" value="ABP33297.1"/>
    <property type="molecule type" value="Genomic_DNA"/>
</dbReference>
<dbReference type="RefSeq" id="WP_011901922.1">
    <property type="nucleotide sequence ID" value="NC_009379.1"/>
</dbReference>
<dbReference type="SMR" id="A4SUY3"/>
<dbReference type="GeneID" id="31480422"/>
<dbReference type="KEGG" id="pnu:Pnuc_0075"/>
<dbReference type="eggNOG" id="COG0099">
    <property type="taxonomic scope" value="Bacteria"/>
</dbReference>
<dbReference type="HOGENOM" id="CLU_103849_1_2_4"/>
<dbReference type="Proteomes" id="UP000000231">
    <property type="component" value="Chromosome"/>
</dbReference>
<dbReference type="GO" id="GO:0005829">
    <property type="term" value="C:cytosol"/>
    <property type="evidence" value="ECO:0007669"/>
    <property type="project" value="TreeGrafter"/>
</dbReference>
<dbReference type="GO" id="GO:0015935">
    <property type="term" value="C:small ribosomal subunit"/>
    <property type="evidence" value="ECO:0007669"/>
    <property type="project" value="TreeGrafter"/>
</dbReference>
<dbReference type="GO" id="GO:0019843">
    <property type="term" value="F:rRNA binding"/>
    <property type="evidence" value="ECO:0007669"/>
    <property type="project" value="UniProtKB-UniRule"/>
</dbReference>
<dbReference type="GO" id="GO:0003735">
    <property type="term" value="F:structural constituent of ribosome"/>
    <property type="evidence" value="ECO:0007669"/>
    <property type="project" value="InterPro"/>
</dbReference>
<dbReference type="GO" id="GO:0000049">
    <property type="term" value="F:tRNA binding"/>
    <property type="evidence" value="ECO:0007669"/>
    <property type="project" value="UniProtKB-UniRule"/>
</dbReference>
<dbReference type="GO" id="GO:0006412">
    <property type="term" value="P:translation"/>
    <property type="evidence" value="ECO:0007669"/>
    <property type="project" value="UniProtKB-UniRule"/>
</dbReference>
<dbReference type="FunFam" id="1.10.8.50:FF:000001">
    <property type="entry name" value="30S ribosomal protein S13"/>
    <property type="match status" value="1"/>
</dbReference>
<dbReference type="FunFam" id="4.10.910.10:FF:000001">
    <property type="entry name" value="30S ribosomal protein S13"/>
    <property type="match status" value="1"/>
</dbReference>
<dbReference type="Gene3D" id="1.10.8.50">
    <property type="match status" value="1"/>
</dbReference>
<dbReference type="Gene3D" id="4.10.910.10">
    <property type="entry name" value="30s ribosomal protein s13, domain 2"/>
    <property type="match status" value="1"/>
</dbReference>
<dbReference type="HAMAP" id="MF_01315">
    <property type="entry name" value="Ribosomal_uS13"/>
    <property type="match status" value="1"/>
</dbReference>
<dbReference type="InterPro" id="IPR027437">
    <property type="entry name" value="Rbsml_uS13_C"/>
</dbReference>
<dbReference type="InterPro" id="IPR001892">
    <property type="entry name" value="Ribosomal_uS13"/>
</dbReference>
<dbReference type="InterPro" id="IPR010979">
    <property type="entry name" value="Ribosomal_uS13-like_H2TH"/>
</dbReference>
<dbReference type="InterPro" id="IPR019980">
    <property type="entry name" value="Ribosomal_uS13_bac-type"/>
</dbReference>
<dbReference type="InterPro" id="IPR018269">
    <property type="entry name" value="Ribosomal_uS13_CS"/>
</dbReference>
<dbReference type="NCBIfam" id="TIGR03631">
    <property type="entry name" value="uS13_bact"/>
    <property type="match status" value="1"/>
</dbReference>
<dbReference type="PANTHER" id="PTHR10871">
    <property type="entry name" value="30S RIBOSOMAL PROTEIN S13/40S RIBOSOMAL PROTEIN S18"/>
    <property type="match status" value="1"/>
</dbReference>
<dbReference type="PANTHER" id="PTHR10871:SF1">
    <property type="entry name" value="SMALL RIBOSOMAL SUBUNIT PROTEIN US13M"/>
    <property type="match status" value="1"/>
</dbReference>
<dbReference type="Pfam" id="PF00416">
    <property type="entry name" value="Ribosomal_S13"/>
    <property type="match status" value="1"/>
</dbReference>
<dbReference type="PIRSF" id="PIRSF002134">
    <property type="entry name" value="Ribosomal_S13"/>
    <property type="match status" value="1"/>
</dbReference>
<dbReference type="SUPFAM" id="SSF46946">
    <property type="entry name" value="S13-like H2TH domain"/>
    <property type="match status" value="1"/>
</dbReference>
<dbReference type="PROSITE" id="PS00646">
    <property type="entry name" value="RIBOSOMAL_S13_1"/>
    <property type="match status" value="1"/>
</dbReference>
<dbReference type="PROSITE" id="PS50159">
    <property type="entry name" value="RIBOSOMAL_S13_2"/>
    <property type="match status" value="1"/>
</dbReference>
<accession>A4SUY3</accession>
<comment type="function">
    <text evidence="1">Located at the top of the head of the 30S subunit, it contacts several helices of the 16S rRNA. In the 70S ribosome it contacts the 23S rRNA (bridge B1a) and protein L5 of the 50S subunit (bridge B1b), connecting the 2 subunits; these bridges are implicated in subunit movement. Contacts the tRNAs in the A and P-sites.</text>
</comment>
<comment type="subunit">
    <text evidence="1">Part of the 30S ribosomal subunit. Forms a loose heterodimer with protein S19. Forms two bridges to the 50S subunit in the 70S ribosome.</text>
</comment>
<comment type="similarity">
    <text evidence="1">Belongs to the universal ribosomal protein uS13 family.</text>
</comment>
<feature type="chain" id="PRO_1000086250" description="Small ribosomal subunit protein uS13">
    <location>
        <begin position="1"/>
        <end position="121"/>
    </location>
</feature>
<feature type="region of interest" description="Disordered" evidence="2">
    <location>
        <begin position="92"/>
        <end position="121"/>
    </location>
</feature>